<dbReference type="EMBL" id="M29648">
    <property type="protein sequence ID" value="AAA35449.1"/>
    <property type="molecule type" value="Genomic_DNA"/>
</dbReference>
<dbReference type="PIR" id="A02261">
    <property type="entry name" value="HAGC"/>
</dbReference>
<dbReference type="PIR" id="A25597">
    <property type="entry name" value="A25597"/>
</dbReference>
<dbReference type="PIR" id="B25597">
    <property type="entry name" value="B25597"/>
</dbReference>
<dbReference type="SMR" id="P01939"/>
<dbReference type="GO" id="GO:0072562">
    <property type="term" value="C:blood microparticle"/>
    <property type="evidence" value="ECO:0007669"/>
    <property type="project" value="TreeGrafter"/>
</dbReference>
<dbReference type="GO" id="GO:0031838">
    <property type="term" value="C:haptoglobin-hemoglobin complex"/>
    <property type="evidence" value="ECO:0007669"/>
    <property type="project" value="TreeGrafter"/>
</dbReference>
<dbReference type="GO" id="GO:0005833">
    <property type="term" value="C:hemoglobin complex"/>
    <property type="evidence" value="ECO:0007669"/>
    <property type="project" value="InterPro"/>
</dbReference>
<dbReference type="GO" id="GO:0031720">
    <property type="term" value="F:haptoglobin binding"/>
    <property type="evidence" value="ECO:0007669"/>
    <property type="project" value="TreeGrafter"/>
</dbReference>
<dbReference type="GO" id="GO:0020037">
    <property type="term" value="F:heme binding"/>
    <property type="evidence" value="ECO:0007669"/>
    <property type="project" value="InterPro"/>
</dbReference>
<dbReference type="GO" id="GO:0005506">
    <property type="term" value="F:iron ion binding"/>
    <property type="evidence" value="ECO:0007669"/>
    <property type="project" value="InterPro"/>
</dbReference>
<dbReference type="GO" id="GO:0043177">
    <property type="term" value="F:organic acid binding"/>
    <property type="evidence" value="ECO:0007669"/>
    <property type="project" value="TreeGrafter"/>
</dbReference>
<dbReference type="GO" id="GO:0019825">
    <property type="term" value="F:oxygen binding"/>
    <property type="evidence" value="ECO:0007669"/>
    <property type="project" value="InterPro"/>
</dbReference>
<dbReference type="GO" id="GO:0005344">
    <property type="term" value="F:oxygen carrier activity"/>
    <property type="evidence" value="ECO:0007669"/>
    <property type="project" value="UniProtKB-KW"/>
</dbReference>
<dbReference type="GO" id="GO:0004601">
    <property type="term" value="F:peroxidase activity"/>
    <property type="evidence" value="ECO:0007669"/>
    <property type="project" value="TreeGrafter"/>
</dbReference>
<dbReference type="GO" id="GO:0042744">
    <property type="term" value="P:hydrogen peroxide catabolic process"/>
    <property type="evidence" value="ECO:0007669"/>
    <property type="project" value="TreeGrafter"/>
</dbReference>
<dbReference type="CDD" id="cd08927">
    <property type="entry name" value="Hb-alpha-like"/>
    <property type="match status" value="1"/>
</dbReference>
<dbReference type="FunFam" id="1.10.490.10:FF:000002">
    <property type="entry name" value="Hemoglobin subunit alpha"/>
    <property type="match status" value="1"/>
</dbReference>
<dbReference type="Gene3D" id="1.10.490.10">
    <property type="entry name" value="Globins"/>
    <property type="match status" value="1"/>
</dbReference>
<dbReference type="InterPro" id="IPR000971">
    <property type="entry name" value="Globin"/>
</dbReference>
<dbReference type="InterPro" id="IPR009050">
    <property type="entry name" value="Globin-like_sf"/>
</dbReference>
<dbReference type="InterPro" id="IPR012292">
    <property type="entry name" value="Globin/Proto"/>
</dbReference>
<dbReference type="InterPro" id="IPR002338">
    <property type="entry name" value="Hemoglobin_a-typ"/>
</dbReference>
<dbReference type="InterPro" id="IPR050056">
    <property type="entry name" value="Hemoglobin_oxygen_transport"/>
</dbReference>
<dbReference type="InterPro" id="IPR002339">
    <property type="entry name" value="Hemoglobin_pi"/>
</dbReference>
<dbReference type="PANTHER" id="PTHR11442">
    <property type="entry name" value="HEMOGLOBIN FAMILY MEMBER"/>
    <property type="match status" value="1"/>
</dbReference>
<dbReference type="PANTHER" id="PTHR11442:SF48">
    <property type="entry name" value="HEMOGLOBIN SUBUNIT ALPHA"/>
    <property type="match status" value="1"/>
</dbReference>
<dbReference type="Pfam" id="PF00042">
    <property type="entry name" value="Globin"/>
    <property type="match status" value="1"/>
</dbReference>
<dbReference type="PRINTS" id="PR00612">
    <property type="entry name" value="ALPHAHAEM"/>
</dbReference>
<dbReference type="PRINTS" id="PR00815">
    <property type="entry name" value="PIHAEM"/>
</dbReference>
<dbReference type="SUPFAM" id="SSF46458">
    <property type="entry name" value="Globin-like"/>
    <property type="match status" value="1"/>
</dbReference>
<dbReference type="PROSITE" id="PS01033">
    <property type="entry name" value="GLOBIN"/>
    <property type="match status" value="1"/>
</dbReference>
<sequence>MVLSPTDKSNVKAAWEKVGAHAGDYGAEALERMFLSFPTTKTYFPHFDLSHGSTQVKGHGKKVADALTNAVLHVDDMPSALSALSDLHAHKLRVDPVNFKLLRHCLLVTLACHHPAEFTPAVHASLDKFMASVSTVLTSKYR</sequence>
<comment type="function">
    <text>Involved in oxygen transport from the lung to the various peripheral tissues.</text>
</comment>
<comment type="subunit">
    <text>Heterotetramer of two alpha chains and two beta chains.</text>
</comment>
<comment type="tissue specificity">
    <text>Red blood cells.</text>
</comment>
<comment type="similarity">
    <text evidence="1">Belongs to the globin family.</text>
</comment>
<gene>
    <name type="primary">HBAB</name>
</gene>
<accession>P01939</accession>
<protein>
    <recommendedName>
        <fullName>Hemoglobin subunit alpha-B</fullName>
    </recommendedName>
    <alternativeName>
        <fullName>Alpha-B-globin</fullName>
    </alternativeName>
    <alternativeName>
        <fullName>Alpha-II</fullName>
    </alternativeName>
    <alternativeName>
        <fullName>Hemoglobin alpha-B chain</fullName>
    </alternativeName>
</protein>
<reference key="1">
    <citation type="journal article" date="1986" name="J. Mol. Biol.">
        <title>Primate evolution of the alpha-globin gene cluster and its Alu-like repeats.</title>
        <authorList>
            <person name="Sawada I."/>
            <person name="Schmid C.W."/>
        </authorList>
    </citation>
    <scope>NUCLEOTIDE SEQUENCE [GENOMIC DNA]</scope>
</reference>
<reference key="2">
    <citation type="journal article" date="1985" name="Biol. Chem. Hoppe-Seyler">
        <title>Amino-acid sequences of the alpha and beta chains of adult hemoglobins of the Grand Galago, Galago crassicaudatus.</title>
        <authorList>
            <person name="Watanabe B."/>
            <person name="Fujii T."/>
            <person name="Nakashima Y."/>
            <person name="Maita T."/>
            <person name="Matsuda G."/>
        </authorList>
    </citation>
    <scope>PROTEIN SEQUENCE OF 2-142</scope>
</reference>
<keyword id="KW-0903">Direct protein sequencing</keyword>
<keyword id="KW-0349">Heme</keyword>
<keyword id="KW-0408">Iron</keyword>
<keyword id="KW-0479">Metal-binding</keyword>
<keyword id="KW-0561">Oxygen transport</keyword>
<keyword id="KW-0813">Transport</keyword>
<evidence type="ECO:0000255" key="1">
    <source>
        <dbReference type="PROSITE-ProRule" id="PRU00238"/>
    </source>
</evidence>
<evidence type="ECO:0000269" key="2">
    <source>
    </source>
</evidence>
<evidence type="ECO:0000305" key="3"/>
<feature type="initiator methionine" description="Removed" evidence="2">
    <location>
        <position position="1"/>
    </location>
</feature>
<feature type="chain" id="PRO_0000052639" description="Hemoglobin subunit alpha-B">
    <location>
        <begin position="2"/>
        <end position="142"/>
    </location>
</feature>
<feature type="domain" description="Globin" evidence="1">
    <location>
        <begin position="2"/>
        <end position="142"/>
    </location>
</feature>
<feature type="binding site" evidence="1">
    <location>
        <position position="59"/>
    </location>
    <ligand>
        <name>O2</name>
        <dbReference type="ChEBI" id="CHEBI:15379"/>
    </ligand>
</feature>
<feature type="binding site" description="proximal binding residue" evidence="1">
    <location>
        <position position="88"/>
    </location>
    <ligand>
        <name>heme b</name>
        <dbReference type="ChEBI" id="CHEBI:60344"/>
    </ligand>
    <ligandPart>
        <name>Fe</name>
        <dbReference type="ChEBI" id="CHEBI:18248"/>
    </ligandPart>
</feature>
<feature type="sequence conflict" description="In Ref. 2; AA sequence." evidence="3" ref="2">
    <original>A</original>
    <variation>G</variation>
    <location>
        <position position="20"/>
    </location>
</feature>
<feature type="sequence conflict" description="In Ref. 2; AA sequence." evidence="3" ref="2">
    <original>T</original>
    <variation>A</variation>
    <location>
        <position position="54"/>
    </location>
</feature>
<feature type="sequence conflict" description="In Ref. 2; AA sequence." evidence="3" ref="2">
    <original>L</original>
    <variation>S</variation>
    <location>
        <position position="72"/>
    </location>
</feature>
<feature type="sequence conflict" description="In Ref. 2; AA sequence." evidence="3" ref="2">
    <original>R</original>
    <variation>S</variation>
    <location>
        <position position="103"/>
    </location>
</feature>
<feature type="sequence conflict" description="In Ref. 2; AA sequence." evidence="3" ref="2">
    <original>F</original>
    <variation>L</variation>
    <location>
        <position position="118"/>
    </location>
</feature>
<feature type="sequence conflict" description="In Ref. 2; AA sequence." evidence="3" ref="2">
    <original>L</original>
    <variation>F</variation>
    <location>
        <position position="126"/>
    </location>
</feature>
<organism>
    <name type="scientific">Otolemur crassicaudatus</name>
    <name type="common">Brown greater galago</name>
    <name type="synonym">Galago crassicaudatus</name>
    <dbReference type="NCBI Taxonomy" id="9463"/>
    <lineage>
        <taxon>Eukaryota</taxon>
        <taxon>Metazoa</taxon>
        <taxon>Chordata</taxon>
        <taxon>Craniata</taxon>
        <taxon>Vertebrata</taxon>
        <taxon>Euteleostomi</taxon>
        <taxon>Mammalia</taxon>
        <taxon>Eutheria</taxon>
        <taxon>Euarchontoglires</taxon>
        <taxon>Primates</taxon>
        <taxon>Strepsirrhini</taxon>
        <taxon>Lorisiformes</taxon>
        <taxon>Galagidae</taxon>
        <taxon>Otolemur</taxon>
    </lineage>
</organism>
<name>HBA2_OTOCR</name>
<proteinExistence type="evidence at protein level"/>